<reference key="1">
    <citation type="journal article" date="2010" name="PLoS Genet.">
        <title>Genome sequence of the plant growth promoting endophytic bacterium Enterobacter sp. 638.</title>
        <authorList>
            <person name="Taghavi S."/>
            <person name="van der Lelie D."/>
            <person name="Hoffman A."/>
            <person name="Zhang Y.B."/>
            <person name="Walla M.D."/>
            <person name="Vangronsveld J."/>
            <person name="Newman L."/>
            <person name="Monchy S."/>
        </authorList>
    </citation>
    <scope>NUCLEOTIDE SEQUENCE [LARGE SCALE GENOMIC DNA]</scope>
    <source>
        <strain>638</strain>
    </source>
</reference>
<sequence length="419" mass="45294">MKFDTVIIGGGLAGILCGLKLTQRGLRCAIVSRGQSALHFSSGSLDLLGALPDGSAVDTPLMALQNPDALPAEHPYRLVGTDNIARLADETETLLATCGPRLRGHARQNHQRVTPLGMLRPAWLSPEEVPVAPIQSQRVCVVGISGFLDFQAHLAAASLRNQGISADTAEIELPELDVLRDNASEFRAVNIARFLDNDDKWPLLFDALQPLSQGCDALYMPACFGLADNRLWRWLSDRLACALYLLPTLPPSVPGIRLHNQLQRQFIAQGGVWMAGDEVKKVTLDNGVVSALWTRNHGDIPLRPRFVVLASGSFFSNGLISTREGIREAVLGLDVRQNPSRADWYQSDFFAPQPWQQFGVITDNTLRPQLSGSPVDNLYAIGSVLGGFDPIALGCGGGVCAITALYAAEQICQRAGGEQ</sequence>
<organism>
    <name type="scientific">Enterobacter sp. (strain 638)</name>
    <dbReference type="NCBI Taxonomy" id="399742"/>
    <lineage>
        <taxon>Bacteria</taxon>
        <taxon>Pseudomonadati</taxon>
        <taxon>Pseudomonadota</taxon>
        <taxon>Gammaproteobacteria</taxon>
        <taxon>Enterobacterales</taxon>
        <taxon>Enterobacteriaceae</taxon>
        <taxon>Enterobacter</taxon>
    </lineage>
</organism>
<dbReference type="EC" id="1.1.5.3" evidence="1"/>
<dbReference type="EMBL" id="CP000653">
    <property type="protein sequence ID" value="ABP61471.1"/>
    <property type="molecule type" value="Genomic_DNA"/>
</dbReference>
<dbReference type="RefSeq" id="WP_015959804.1">
    <property type="nucleotide sequence ID" value="NC_009436.1"/>
</dbReference>
<dbReference type="STRING" id="399742.Ent638_2806"/>
<dbReference type="KEGG" id="ent:Ent638_2806"/>
<dbReference type="eggNOG" id="COG3075">
    <property type="taxonomic scope" value="Bacteria"/>
</dbReference>
<dbReference type="HOGENOM" id="CLU_047793_0_0_6"/>
<dbReference type="OrthoDB" id="6395323at2"/>
<dbReference type="UniPathway" id="UPA00618">
    <property type="reaction ID" value="UER00673"/>
</dbReference>
<dbReference type="Proteomes" id="UP000000230">
    <property type="component" value="Chromosome"/>
</dbReference>
<dbReference type="GO" id="GO:0009331">
    <property type="term" value="C:glycerol-3-phosphate dehydrogenase (FAD) complex"/>
    <property type="evidence" value="ECO:0007669"/>
    <property type="project" value="InterPro"/>
</dbReference>
<dbReference type="GO" id="GO:0004368">
    <property type="term" value="F:glycerol-3-phosphate dehydrogenase (quinone) activity"/>
    <property type="evidence" value="ECO:0007669"/>
    <property type="project" value="UniProtKB-UniRule"/>
</dbReference>
<dbReference type="GO" id="GO:0019563">
    <property type="term" value="P:glycerol catabolic process"/>
    <property type="evidence" value="ECO:0007669"/>
    <property type="project" value="UniProtKB-UniRule"/>
</dbReference>
<dbReference type="Gene3D" id="3.50.50.60">
    <property type="entry name" value="FAD/NAD(P)-binding domain"/>
    <property type="match status" value="1"/>
</dbReference>
<dbReference type="HAMAP" id="MF_00753">
    <property type="entry name" value="Glycerol3P_GlpB"/>
    <property type="match status" value="1"/>
</dbReference>
<dbReference type="InterPro" id="IPR003953">
    <property type="entry name" value="FAD-dep_OxRdtase_2_FAD-bd"/>
</dbReference>
<dbReference type="InterPro" id="IPR036188">
    <property type="entry name" value="FAD/NAD-bd_sf"/>
</dbReference>
<dbReference type="InterPro" id="IPR009158">
    <property type="entry name" value="G3P_DH_GlpB_su"/>
</dbReference>
<dbReference type="NCBIfam" id="TIGR03378">
    <property type="entry name" value="glycerol3P_GlpB"/>
    <property type="match status" value="1"/>
</dbReference>
<dbReference type="NCBIfam" id="NF003718">
    <property type="entry name" value="PRK05329.1-1"/>
    <property type="match status" value="1"/>
</dbReference>
<dbReference type="NCBIfam" id="NF003719">
    <property type="entry name" value="PRK05329.1-2"/>
    <property type="match status" value="1"/>
</dbReference>
<dbReference type="NCBIfam" id="NF003720">
    <property type="entry name" value="PRK05329.1-3"/>
    <property type="match status" value="1"/>
</dbReference>
<dbReference type="Pfam" id="PF00890">
    <property type="entry name" value="FAD_binding_2"/>
    <property type="match status" value="1"/>
</dbReference>
<dbReference type="PIRSF" id="PIRSF000141">
    <property type="entry name" value="Anaerobic_G3P_dh"/>
    <property type="match status" value="1"/>
</dbReference>
<dbReference type="SUPFAM" id="SSF51905">
    <property type="entry name" value="FAD/NAD(P)-binding domain"/>
    <property type="match status" value="1"/>
</dbReference>
<protein>
    <recommendedName>
        <fullName evidence="1">Anaerobic glycerol-3-phosphate dehydrogenase subunit B</fullName>
        <shortName evidence="1">Anaerobic G-3-P dehydrogenase subunit B</shortName>
        <shortName evidence="1">Anaerobic G3Pdhase B</shortName>
        <ecNumber evidence="1">1.1.5.3</ecNumber>
    </recommendedName>
</protein>
<keyword id="KW-0285">Flavoprotein</keyword>
<keyword id="KW-0288">FMN</keyword>
<keyword id="KW-0560">Oxidoreductase</keyword>
<accession>A4WCP1</accession>
<feature type="chain" id="PRO_1000062193" description="Anaerobic glycerol-3-phosphate dehydrogenase subunit B">
    <location>
        <begin position="1"/>
        <end position="419"/>
    </location>
</feature>
<comment type="function">
    <text evidence="1">Conversion of glycerol 3-phosphate to dihydroxyacetone. Uses fumarate or nitrate as electron acceptor.</text>
</comment>
<comment type="catalytic activity">
    <reaction evidence="1">
        <text>a quinone + sn-glycerol 3-phosphate = dihydroxyacetone phosphate + a quinol</text>
        <dbReference type="Rhea" id="RHEA:18977"/>
        <dbReference type="ChEBI" id="CHEBI:24646"/>
        <dbReference type="ChEBI" id="CHEBI:57597"/>
        <dbReference type="ChEBI" id="CHEBI:57642"/>
        <dbReference type="ChEBI" id="CHEBI:132124"/>
        <dbReference type="EC" id="1.1.5.3"/>
    </reaction>
</comment>
<comment type="cofactor">
    <cofactor evidence="1">
        <name>FMN</name>
        <dbReference type="ChEBI" id="CHEBI:58210"/>
    </cofactor>
</comment>
<comment type="pathway">
    <text evidence="1">Polyol metabolism; glycerol degradation via glycerol kinase pathway; glycerone phosphate from sn-glycerol 3-phosphate (anaerobic route): step 1/1.</text>
</comment>
<comment type="subunit">
    <text evidence="1">Composed of a catalytic GlpA/B dimer and of membrane bound GlpC.</text>
</comment>
<comment type="similarity">
    <text evidence="1">Belongs to the anaerobic G-3-P dehydrogenase subunit B family.</text>
</comment>
<proteinExistence type="inferred from homology"/>
<gene>
    <name evidence="1" type="primary">glpB</name>
    <name type="ordered locus">Ent638_2806</name>
</gene>
<name>GLPB_ENT38</name>
<evidence type="ECO:0000255" key="1">
    <source>
        <dbReference type="HAMAP-Rule" id="MF_00753"/>
    </source>
</evidence>